<organism>
    <name type="scientific">Streptococcus suis (strain 98HAH33)</name>
    <dbReference type="NCBI Taxonomy" id="391296"/>
    <lineage>
        <taxon>Bacteria</taxon>
        <taxon>Bacillati</taxon>
        <taxon>Bacillota</taxon>
        <taxon>Bacilli</taxon>
        <taxon>Lactobacillales</taxon>
        <taxon>Streptococcaceae</taxon>
        <taxon>Streptococcus</taxon>
    </lineage>
</organism>
<accession>A4W2F8</accession>
<proteinExistence type="inferred from homology"/>
<comment type="function">
    <text evidence="1">Catalyzes the base-exchange of a guanine (G) residue with the queuine precursor 7-aminomethyl-7-deazaguanine (PreQ1) at position 34 (anticodon wobble position) in tRNAs with GU(N) anticodons (tRNA-Asp, -Asn, -His and -Tyr). Catalysis occurs through a double-displacement mechanism. The nucleophile active site attacks the C1' of nucleotide 34 to detach the guanine base from the RNA, forming a covalent enzyme-RNA intermediate. The proton acceptor active site deprotonates the incoming PreQ1, allowing a nucleophilic attack on the C1' of the ribose to form the product. After dissociation, two additional enzymatic reactions on the tRNA convert PreQ1 to queuine (Q), resulting in the hypermodified nucleoside queuosine (7-(((4,5-cis-dihydroxy-2-cyclopenten-1-yl)amino)methyl)-7-deazaguanosine).</text>
</comment>
<comment type="catalytic activity">
    <reaction evidence="1">
        <text>7-aminomethyl-7-carbaguanine + guanosine(34) in tRNA = 7-aminomethyl-7-carbaguanosine(34) in tRNA + guanine</text>
        <dbReference type="Rhea" id="RHEA:24104"/>
        <dbReference type="Rhea" id="RHEA-COMP:10341"/>
        <dbReference type="Rhea" id="RHEA-COMP:10342"/>
        <dbReference type="ChEBI" id="CHEBI:16235"/>
        <dbReference type="ChEBI" id="CHEBI:58703"/>
        <dbReference type="ChEBI" id="CHEBI:74269"/>
        <dbReference type="ChEBI" id="CHEBI:82833"/>
        <dbReference type="EC" id="2.4.2.29"/>
    </reaction>
</comment>
<comment type="cofactor">
    <cofactor evidence="1">
        <name>Zn(2+)</name>
        <dbReference type="ChEBI" id="CHEBI:29105"/>
    </cofactor>
    <text evidence="1">Binds 1 zinc ion per subunit.</text>
</comment>
<comment type="pathway">
    <text evidence="1">tRNA modification; tRNA-queuosine biosynthesis.</text>
</comment>
<comment type="subunit">
    <text evidence="1">Homodimer. Within each dimer, one monomer is responsible for RNA recognition and catalysis, while the other monomer binds to the replacement base PreQ1.</text>
</comment>
<comment type="similarity">
    <text evidence="1">Belongs to the queuine tRNA-ribosyltransferase family.</text>
</comment>
<dbReference type="EC" id="2.4.2.29" evidence="1"/>
<dbReference type="EMBL" id="CP000408">
    <property type="protein sequence ID" value="ABP92547.1"/>
    <property type="molecule type" value="Genomic_DNA"/>
</dbReference>
<dbReference type="SMR" id="A4W2F8"/>
<dbReference type="KEGG" id="ssv:SSU98_1389"/>
<dbReference type="HOGENOM" id="CLU_022060_0_1_9"/>
<dbReference type="UniPathway" id="UPA00392"/>
<dbReference type="GO" id="GO:0005829">
    <property type="term" value="C:cytosol"/>
    <property type="evidence" value="ECO:0007669"/>
    <property type="project" value="TreeGrafter"/>
</dbReference>
<dbReference type="GO" id="GO:0046872">
    <property type="term" value="F:metal ion binding"/>
    <property type="evidence" value="ECO:0007669"/>
    <property type="project" value="UniProtKB-KW"/>
</dbReference>
<dbReference type="GO" id="GO:0008479">
    <property type="term" value="F:tRNA-guanosine(34) queuine transglycosylase activity"/>
    <property type="evidence" value="ECO:0007669"/>
    <property type="project" value="UniProtKB-UniRule"/>
</dbReference>
<dbReference type="GO" id="GO:0008616">
    <property type="term" value="P:queuosine biosynthetic process"/>
    <property type="evidence" value="ECO:0007669"/>
    <property type="project" value="UniProtKB-UniRule"/>
</dbReference>
<dbReference type="GO" id="GO:0002099">
    <property type="term" value="P:tRNA wobble guanine modification"/>
    <property type="evidence" value="ECO:0007669"/>
    <property type="project" value="TreeGrafter"/>
</dbReference>
<dbReference type="GO" id="GO:0101030">
    <property type="term" value="P:tRNA-guanine transglycosylation"/>
    <property type="evidence" value="ECO:0007669"/>
    <property type="project" value="InterPro"/>
</dbReference>
<dbReference type="FunFam" id="3.20.20.105:FF:000001">
    <property type="entry name" value="Queuine tRNA-ribosyltransferase"/>
    <property type="match status" value="1"/>
</dbReference>
<dbReference type="Gene3D" id="3.20.20.105">
    <property type="entry name" value="Queuine tRNA-ribosyltransferase-like"/>
    <property type="match status" value="1"/>
</dbReference>
<dbReference type="HAMAP" id="MF_00168">
    <property type="entry name" value="Q_tRNA_Tgt"/>
    <property type="match status" value="1"/>
</dbReference>
<dbReference type="InterPro" id="IPR050076">
    <property type="entry name" value="ArchSynthase1/Queuine_TRR"/>
</dbReference>
<dbReference type="InterPro" id="IPR004803">
    <property type="entry name" value="TGT"/>
</dbReference>
<dbReference type="InterPro" id="IPR036511">
    <property type="entry name" value="TGT-like_sf"/>
</dbReference>
<dbReference type="InterPro" id="IPR002616">
    <property type="entry name" value="tRNA_ribo_trans-like"/>
</dbReference>
<dbReference type="NCBIfam" id="TIGR00430">
    <property type="entry name" value="Q_tRNA_tgt"/>
    <property type="match status" value="1"/>
</dbReference>
<dbReference type="NCBIfam" id="TIGR00449">
    <property type="entry name" value="tgt_general"/>
    <property type="match status" value="1"/>
</dbReference>
<dbReference type="PANTHER" id="PTHR46499">
    <property type="entry name" value="QUEUINE TRNA-RIBOSYLTRANSFERASE"/>
    <property type="match status" value="1"/>
</dbReference>
<dbReference type="PANTHER" id="PTHR46499:SF1">
    <property type="entry name" value="QUEUINE TRNA-RIBOSYLTRANSFERASE"/>
    <property type="match status" value="1"/>
</dbReference>
<dbReference type="Pfam" id="PF01702">
    <property type="entry name" value="TGT"/>
    <property type="match status" value="1"/>
</dbReference>
<dbReference type="SUPFAM" id="SSF51713">
    <property type="entry name" value="tRNA-guanine transglycosylase"/>
    <property type="match status" value="1"/>
</dbReference>
<name>TGT_STRS2</name>
<sequence length="380" mass="43037">MTDVPIKYRLIKKEKHTGARLGEIITPHGTFPTPMFMPVGTQATVKTMSPEELKAMGSGIILSNTYHLWLRPGDELVARAGGLHKFMNWDQPILTDSGGFQVYSLADSRNISEEGVTFKNHLNGSKMFLSPEKAISIQNNLGSDIMMSFDECPQFYQPYDYVKKSIERTSRWAERGLKAHRRPHDQGLFGIVQGAGFEDLRRQSAHDLVSMDFPGYSIGGLAVGETHDEMNAVLDFTTPLLPENKPRYLMGVGAPDSLIDGVIRGVDMFDCVLPTRIARNGTCMTNRGRLVVKNAQFAEDFTPLDPECDCYTCKNYTRAYLRHLLKADETFGIRLTSYHNLYFLINLMKNVRQAIMDDNLLEFRQDFMEKYGYGKNGRNF</sequence>
<reference key="1">
    <citation type="journal article" date="2007" name="PLoS ONE">
        <title>A glimpse of streptococcal toxic shock syndrome from comparative genomics of S. suis 2 Chinese isolates.</title>
        <authorList>
            <person name="Chen C."/>
            <person name="Tang J."/>
            <person name="Dong W."/>
            <person name="Wang C."/>
            <person name="Feng Y."/>
            <person name="Wang J."/>
            <person name="Zheng F."/>
            <person name="Pan X."/>
            <person name="Liu D."/>
            <person name="Li M."/>
            <person name="Song Y."/>
            <person name="Zhu X."/>
            <person name="Sun H."/>
            <person name="Feng T."/>
            <person name="Guo Z."/>
            <person name="Ju A."/>
            <person name="Ge J."/>
            <person name="Dong Y."/>
            <person name="Sun W."/>
            <person name="Jiang Y."/>
            <person name="Wang J."/>
            <person name="Yan J."/>
            <person name="Yang H."/>
            <person name="Wang X."/>
            <person name="Gao G.F."/>
            <person name="Yang R."/>
            <person name="Wang J."/>
            <person name="Yu J."/>
        </authorList>
    </citation>
    <scope>NUCLEOTIDE SEQUENCE [LARGE SCALE GENOMIC DNA]</scope>
    <source>
        <strain>98HAH33</strain>
    </source>
</reference>
<keyword id="KW-0328">Glycosyltransferase</keyword>
<keyword id="KW-0479">Metal-binding</keyword>
<keyword id="KW-0671">Queuosine biosynthesis</keyword>
<keyword id="KW-0808">Transferase</keyword>
<keyword id="KW-0819">tRNA processing</keyword>
<keyword id="KW-0862">Zinc</keyword>
<evidence type="ECO:0000255" key="1">
    <source>
        <dbReference type="HAMAP-Rule" id="MF_00168"/>
    </source>
</evidence>
<gene>
    <name evidence="1" type="primary">tgt</name>
    <name type="ordered locus">SSU98_1389</name>
</gene>
<protein>
    <recommendedName>
        <fullName evidence="1">Queuine tRNA-ribosyltransferase</fullName>
        <ecNumber evidence="1">2.4.2.29</ecNumber>
    </recommendedName>
    <alternativeName>
        <fullName evidence="1">Guanine insertion enzyme</fullName>
    </alternativeName>
    <alternativeName>
        <fullName evidence="1">tRNA-guanine transglycosylase</fullName>
    </alternativeName>
</protein>
<feature type="chain" id="PRO_1000016874" description="Queuine tRNA-ribosyltransferase">
    <location>
        <begin position="1"/>
        <end position="380"/>
    </location>
</feature>
<feature type="region of interest" description="RNA binding" evidence="1">
    <location>
        <begin position="251"/>
        <end position="257"/>
    </location>
</feature>
<feature type="region of interest" description="RNA binding; important for wobble base 34 recognition" evidence="1">
    <location>
        <begin position="275"/>
        <end position="279"/>
    </location>
</feature>
<feature type="active site" description="Proton acceptor" evidence="1">
    <location>
        <position position="96"/>
    </location>
</feature>
<feature type="active site" description="Nucleophile" evidence="1">
    <location>
        <position position="270"/>
    </location>
</feature>
<feature type="binding site" evidence="1">
    <location>
        <begin position="96"/>
        <end position="100"/>
    </location>
    <ligand>
        <name>substrate</name>
    </ligand>
</feature>
<feature type="binding site" evidence="1">
    <location>
        <position position="150"/>
    </location>
    <ligand>
        <name>substrate</name>
    </ligand>
</feature>
<feature type="binding site" evidence="1">
    <location>
        <position position="193"/>
    </location>
    <ligand>
        <name>substrate</name>
    </ligand>
</feature>
<feature type="binding site" evidence="1">
    <location>
        <position position="220"/>
    </location>
    <ligand>
        <name>substrate</name>
    </ligand>
</feature>
<feature type="binding site" evidence="1">
    <location>
        <position position="308"/>
    </location>
    <ligand>
        <name>Zn(2+)</name>
        <dbReference type="ChEBI" id="CHEBI:29105"/>
    </ligand>
</feature>
<feature type="binding site" evidence="1">
    <location>
        <position position="310"/>
    </location>
    <ligand>
        <name>Zn(2+)</name>
        <dbReference type="ChEBI" id="CHEBI:29105"/>
    </ligand>
</feature>
<feature type="binding site" evidence="1">
    <location>
        <position position="313"/>
    </location>
    <ligand>
        <name>Zn(2+)</name>
        <dbReference type="ChEBI" id="CHEBI:29105"/>
    </ligand>
</feature>
<feature type="binding site" evidence="1">
    <location>
        <position position="339"/>
    </location>
    <ligand>
        <name>Zn(2+)</name>
        <dbReference type="ChEBI" id="CHEBI:29105"/>
    </ligand>
</feature>